<name>ADD_MYCTU</name>
<organism>
    <name type="scientific">Mycobacterium tuberculosis (strain ATCC 25618 / H37Rv)</name>
    <dbReference type="NCBI Taxonomy" id="83332"/>
    <lineage>
        <taxon>Bacteria</taxon>
        <taxon>Bacillati</taxon>
        <taxon>Actinomycetota</taxon>
        <taxon>Actinomycetes</taxon>
        <taxon>Mycobacteriales</taxon>
        <taxon>Mycobacteriaceae</taxon>
        <taxon>Mycobacterium</taxon>
        <taxon>Mycobacterium tuberculosis complex</taxon>
    </lineage>
</organism>
<accession>P63907</accession>
<accession>L0TCF2</accession>
<accession>O53365</accession>
<feature type="chain" id="PRO_0000194374" description="Adenosine deaminase">
    <location>
        <begin position="1"/>
        <end position="365"/>
    </location>
</feature>
<feature type="active site" description="Proton donor" evidence="1">
    <location>
        <position position="211"/>
    </location>
</feature>
<feature type="binding site" evidence="1">
    <location>
        <position position="19"/>
    </location>
    <ligand>
        <name>Zn(2+)</name>
        <dbReference type="ChEBI" id="CHEBI:29105"/>
        <note>catalytic</note>
    </ligand>
</feature>
<feature type="binding site" evidence="1">
    <location>
        <position position="21"/>
    </location>
    <ligand>
        <name>substrate</name>
    </ligand>
</feature>
<feature type="binding site" evidence="1">
    <location>
        <position position="21"/>
    </location>
    <ligand>
        <name>Zn(2+)</name>
        <dbReference type="ChEBI" id="CHEBI:29105"/>
        <note>catalytic</note>
    </ligand>
</feature>
<feature type="binding site" evidence="1">
    <location>
        <position position="23"/>
    </location>
    <ligand>
        <name>substrate</name>
    </ligand>
</feature>
<feature type="binding site" evidence="1">
    <location>
        <position position="181"/>
    </location>
    <ligand>
        <name>substrate</name>
    </ligand>
</feature>
<feature type="binding site" evidence="1">
    <location>
        <position position="208"/>
    </location>
    <ligand>
        <name>Zn(2+)</name>
        <dbReference type="ChEBI" id="CHEBI:29105"/>
        <note>catalytic</note>
    </ligand>
</feature>
<feature type="binding site" evidence="1">
    <location>
        <position position="300"/>
    </location>
    <ligand>
        <name>Zn(2+)</name>
        <dbReference type="ChEBI" id="CHEBI:29105"/>
        <note>catalytic</note>
    </ligand>
</feature>
<feature type="site" description="Important for catalytic activity" evidence="1">
    <location>
        <position position="232"/>
    </location>
</feature>
<comment type="function">
    <text evidence="1">Catalyzes the hydrolytic deamination of adenosine and 2-deoxyadenosine.</text>
</comment>
<comment type="catalytic activity">
    <reaction evidence="1">
        <text>adenosine + H2O + H(+) = inosine + NH4(+)</text>
        <dbReference type="Rhea" id="RHEA:24408"/>
        <dbReference type="ChEBI" id="CHEBI:15377"/>
        <dbReference type="ChEBI" id="CHEBI:15378"/>
        <dbReference type="ChEBI" id="CHEBI:16335"/>
        <dbReference type="ChEBI" id="CHEBI:17596"/>
        <dbReference type="ChEBI" id="CHEBI:28938"/>
        <dbReference type="EC" id="3.5.4.4"/>
    </reaction>
    <physiologicalReaction direction="left-to-right" evidence="1">
        <dbReference type="Rhea" id="RHEA:24409"/>
    </physiologicalReaction>
</comment>
<comment type="catalytic activity">
    <reaction evidence="1">
        <text>2'-deoxyadenosine + H2O + H(+) = 2'-deoxyinosine + NH4(+)</text>
        <dbReference type="Rhea" id="RHEA:28190"/>
        <dbReference type="ChEBI" id="CHEBI:15377"/>
        <dbReference type="ChEBI" id="CHEBI:15378"/>
        <dbReference type="ChEBI" id="CHEBI:17256"/>
        <dbReference type="ChEBI" id="CHEBI:28938"/>
        <dbReference type="ChEBI" id="CHEBI:28997"/>
        <dbReference type="EC" id="3.5.4.4"/>
    </reaction>
    <physiologicalReaction direction="left-to-right" evidence="1">
        <dbReference type="Rhea" id="RHEA:28191"/>
    </physiologicalReaction>
</comment>
<comment type="cofactor">
    <cofactor evidence="1">
        <name>Zn(2+)</name>
        <dbReference type="ChEBI" id="CHEBI:29105"/>
    </cofactor>
    <text evidence="1">Binds 1 zinc ion per subunit.</text>
</comment>
<comment type="similarity">
    <text evidence="1">Belongs to the metallo-dependent hydrolases superfamily. Adenosine and AMP deaminases family. Adenosine deaminase subfamily.</text>
</comment>
<gene>
    <name evidence="1" type="primary">add</name>
    <name type="ordered locus">Rv3313c</name>
    <name type="ORF">MTV016.13</name>
</gene>
<evidence type="ECO:0000255" key="1">
    <source>
        <dbReference type="HAMAP-Rule" id="MF_00540"/>
    </source>
</evidence>
<protein>
    <recommendedName>
        <fullName evidence="1">Adenosine deaminase</fullName>
        <ecNumber evidence="1">3.5.4.4</ecNumber>
    </recommendedName>
    <alternativeName>
        <fullName evidence="1">Adenosine aminohydrolase</fullName>
    </alternativeName>
</protein>
<proteinExistence type="evidence at protein level"/>
<sequence>MTAAPTLQTIRLAPKALLHDHLDGGLRPATVLDIAGQVGYDDLPATDVDALASWFRTQSHSGSLERYLEPFSHTVAVMQTPEALYRVAFECAQDLAADSVVYAEVRFAPELHISCGLSFDDVVDTVLTGFAAGEKACAADGQPITVRCLVTAMRHAAMSREIAELAIRFRDKGVVGFDIAGAEAGHPPTRHLDAFEYMRDHNARFTIHAGEAFGLPSIHEAIAFCGADRLGHGVRIVDDIDVDADGGFQLGRLAAILRDKRIPLELCPSSNVQTGAVASIAEHPFDLLARARFRVTVNTDNRLMSDTSMSLEMHRLVEAFGYGWSDLARFTVNAMKSAFIPFDQRLAIIDEVIKPRFAALMGHSE</sequence>
<keyword id="KW-0378">Hydrolase</keyword>
<keyword id="KW-0479">Metal-binding</keyword>
<keyword id="KW-0546">Nucleotide metabolism</keyword>
<keyword id="KW-1185">Reference proteome</keyword>
<keyword id="KW-0862">Zinc</keyword>
<dbReference type="EC" id="3.5.4.4" evidence="1"/>
<dbReference type="EMBL" id="AL123456">
    <property type="protein sequence ID" value="CCP46133.1"/>
    <property type="molecule type" value="Genomic_DNA"/>
</dbReference>
<dbReference type="PIR" id="H70842">
    <property type="entry name" value="H70842"/>
</dbReference>
<dbReference type="RefSeq" id="NP_217830.1">
    <property type="nucleotide sequence ID" value="NC_000962.3"/>
</dbReference>
<dbReference type="RefSeq" id="WP_003417259.1">
    <property type="nucleotide sequence ID" value="NZ_NVQJ01000003.1"/>
</dbReference>
<dbReference type="SMR" id="P63907"/>
<dbReference type="FunCoup" id="P63907">
    <property type="interactions" value="334"/>
</dbReference>
<dbReference type="STRING" id="83332.Rv3313c"/>
<dbReference type="PaxDb" id="83332-Rv3313c"/>
<dbReference type="DNASU" id="887994"/>
<dbReference type="GeneID" id="887994"/>
<dbReference type="KEGG" id="mtu:Rv3313c"/>
<dbReference type="KEGG" id="mtv:RVBD_3313c"/>
<dbReference type="TubercuList" id="Rv3313c"/>
<dbReference type="eggNOG" id="COG1816">
    <property type="taxonomic scope" value="Bacteria"/>
</dbReference>
<dbReference type="InParanoid" id="P63907"/>
<dbReference type="OrthoDB" id="9779574at2"/>
<dbReference type="PhylomeDB" id="P63907"/>
<dbReference type="Proteomes" id="UP000001584">
    <property type="component" value="Chromosome"/>
</dbReference>
<dbReference type="GO" id="GO:0005829">
    <property type="term" value="C:cytosol"/>
    <property type="evidence" value="ECO:0000318"/>
    <property type="project" value="GO_Central"/>
</dbReference>
<dbReference type="GO" id="GO:0046936">
    <property type="term" value="F:2'-deoxyadenosine deaminase activity"/>
    <property type="evidence" value="ECO:0007669"/>
    <property type="project" value="RHEA"/>
</dbReference>
<dbReference type="GO" id="GO:0004000">
    <property type="term" value="F:adenosine deaminase activity"/>
    <property type="evidence" value="ECO:0000318"/>
    <property type="project" value="GO_Central"/>
</dbReference>
<dbReference type="GO" id="GO:0008270">
    <property type="term" value="F:zinc ion binding"/>
    <property type="evidence" value="ECO:0007669"/>
    <property type="project" value="UniProtKB-UniRule"/>
</dbReference>
<dbReference type="GO" id="GO:0006154">
    <property type="term" value="P:adenosine catabolic process"/>
    <property type="evidence" value="ECO:0000318"/>
    <property type="project" value="GO_Central"/>
</dbReference>
<dbReference type="GO" id="GO:0043103">
    <property type="term" value="P:hypoxanthine salvage"/>
    <property type="evidence" value="ECO:0000318"/>
    <property type="project" value="GO_Central"/>
</dbReference>
<dbReference type="GO" id="GO:0046103">
    <property type="term" value="P:inosine biosynthetic process"/>
    <property type="evidence" value="ECO:0000318"/>
    <property type="project" value="GO_Central"/>
</dbReference>
<dbReference type="GO" id="GO:0009117">
    <property type="term" value="P:nucleotide metabolic process"/>
    <property type="evidence" value="ECO:0007669"/>
    <property type="project" value="UniProtKB-KW"/>
</dbReference>
<dbReference type="GO" id="GO:0009168">
    <property type="term" value="P:purine ribonucleoside monophosphate biosynthetic process"/>
    <property type="evidence" value="ECO:0007669"/>
    <property type="project" value="UniProtKB-UniRule"/>
</dbReference>
<dbReference type="FunFam" id="3.20.20.140:FF:000020">
    <property type="entry name" value="Adenosine deaminase"/>
    <property type="match status" value="1"/>
</dbReference>
<dbReference type="Gene3D" id="3.20.20.140">
    <property type="entry name" value="Metal-dependent hydrolases"/>
    <property type="match status" value="1"/>
</dbReference>
<dbReference type="HAMAP" id="MF_00540">
    <property type="entry name" value="A_deaminase"/>
    <property type="match status" value="1"/>
</dbReference>
<dbReference type="InterPro" id="IPR028893">
    <property type="entry name" value="A_deaminase"/>
</dbReference>
<dbReference type="InterPro" id="IPR001365">
    <property type="entry name" value="A_deaminase_dom"/>
</dbReference>
<dbReference type="InterPro" id="IPR006330">
    <property type="entry name" value="Ado/ade_deaminase"/>
</dbReference>
<dbReference type="InterPro" id="IPR032466">
    <property type="entry name" value="Metal_Hydrolase"/>
</dbReference>
<dbReference type="NCBIfam" id="TIGR01430">
    <property type="entry name" value="aden_deam"/>
    <property type="match status" value="1"/>
</dbReference>
<dbReference type="NCBIfam" id="NF006847">
    <property type="entry name" value="PRK09358.1-2"/>
    <property type="match status" value="1"/>
</dbReference>
<dbReference type="PANTHER" id="PTHR11409">
    <property type="entry name" value="ADENOSINE DEAMINASE"/>
    <property type="match status" value="1"/>
</dbReference>
<dbReference type="PANTHER" id="PTHR11409:SF43">
    <property type="entry name" value="ADENOSINE DEAMINASE"/>
    <property type="match status" value="1"/>
</dbReference>
<dbReference type="Pfam" id="PF00962">
    <property type="entry name" value="A_deaminase"/>
    <property type="match status" value="1"/>
</dbReference>
<dbReference type="SUPFAM" id="SSF51556">
    <property type="entry name" value="Metallo-dependent hydrolases"/>
    <property type="match status" value="1"/>
</dbReference>
<reference key="1">
    <citation type="journal article" date="1998" name="Nature">
        <title>Deciphering the biology of Mycobacterium tuberculosis from the complete genome sequence.</title>
        <authorList>
            <person name="Cole S.T."/>
            <person name="Brosch R."/>
            <person name="Parkhill J."/>
            <person name="Garnier T."/>
            <person name="Churcher C.M."/>
            <person name="Harris D.E."/>
            <person name="Gordon S.V."/>
            <person name="Eiglmeier K."/>
            <person name="Gas S."/>
            <person name="Barry C.E. III"/>
            <person name="Tekaia F."/>
            <person name="Badcock K."/>
            <person name="Basham D."/>
            <person name="Brown D."/>
            <person name="Chillingworth T."/>
            <person name="Connor R."/>
            <person name="Davies R.M."/>
            <person name="Devlin K."/>
            <person name="Feltwell T."/>
            <person name="Gentles S."/>
            <person name="Hamlin N."/>
            <person name="Holroyd S."/>
            <person name="Hornsby T."/>
            <person name="Jagels K."/>
            <person name="Krogh A."/>
            <person name="McLean J."/>
            <person name="Moule S."/>
            <person name="Murphy L.D."/>
            <person name="Oliver S."/>
            <person name="Osborne J."/>
            <person name="Quail M.A."/>
            <person name="Rajandream M.A."/>
            <person name="Rogers J."/>
            <person name="Rutter S."/>
            <person name="Seeger K."/>
            <person name="Skelton S."/>
            <person name="Squares S."/>
            <person name="Squares R."/>
            <person name="Sulston J.E."/>
            <person name="Taylor K."/>
            <person name="Whitehead S."/>
            <person name="Barrell B.G."/>
        </authorList>
    </citation>
    <scope>NUCLEOTIDE SEQUENCE [LARGE SCALE GENOMIC DNA]</scope>
    <source>
        <strain>ATCC 25618 / H37Rv</strain>
    </source>
</reference>
<reference key="2">
    <citation type="journal article" date="2011" name="Mol. Cell. Proteomics">
        <title>Proteogenomic analysis of Mycobacterium tuberculosis by high resolution mass spectrometry.</title>
        <authorList>
            <person name="Kelkar D.S."/>
            <person name="Kumar D."/>
            <person name="Kumar P."/>
            <person name="Balakrishnan L."/>
            <person name="Muthusamy B."/>
            <person name="Yadav A.K."/>
            <person name="Shrivastava P."/>
            <person name="Marimuthu A."/>
            <person name="Anand S."/>
            <person name="Sundaram H."/>
            <person name="Kingsbury R."/>
            <person name="Harsha H.C."/>
            <person name="Nair B."/>
            <person name="Prasad T.S."/>
            <person name="Chauhan D.S."/>
            <person name="Katoch K."/>
            <person name="Katoch V.M."/>
            <person name="Kumar P."/>
            <person name="Chaerkady R."/>
            <person name="Ramachandran S."/>
            <person name="Dash D."/>
            <person name="Pandey A."/>
        </authorList>
    </citation>
    <scope>IDENTIFICATION BY MASS SPECTROMETRY [LARGE SCALE ANALYSIS]</scope>
    <source>
        <strain>ATCC 25618 / H37Rv</strain>
    </source>
</reference>